<proteinExistence type="inferred from homology"/>
<sequence>MKRVVITGLGIISSIGNNKIEVLTSLLETKSGISFSKEMERSGMRSHVWGNIKLDNYQENIDRKIFRFMNDASIYSYLSMKQAIEDAKLTSKMYQNNPRVGVIIGSSSGSPRCQINGVSIIKKTKRLKSVSPYTVIKSMTSSISACLSTLFKIQGVNYSISSACATSAHCIGNAMELIQLGKQDLIFAGGGEELSWELACAFDSMGALSTMYNSQPILSSRVFDYYRDGFVISGGAGILVVEELNYALSRSAHIYAEIVGYGTSSDGYNVVVPSGNGAMRCMNIAMSNIQEPIDYLNVHSTSTKIGDLIELNAIQQVFRKTSIPILSSTKSITGHSLGASGVQEMIYSLLMLKYNFIVPSINIFKLDPKAKNCNILTTMMRKELSIIMSNSFGFGGTNVSLIIKKFV</sequence>
<accession>Q89AY4</accession>
<comment type="function">
    <text evidence="1">Involved in the type II fatty acid elongation cycle. Catalyzes the elongation of a wide range of acyl-ACP by the addition of two carbons from malonyl-ACP to an acyl acceptor. Can also use unsaturated fatty acids. Catalyzes a key reaction in unsaturated fatty acid (UFA) synthesis, the elongation of the cis-3-decenoyl-ACP produced by FabA.</text>
</comment>
<comment type="catalytic activity">
    <reaction evidence="1">
        <text>a fatty acyl-[ACP] + malonyl-[ACP] + H(+) = a 3-oxoacyl-[ACP] + holo-[ACP] + CO2</text>
        <dbReference type="Rhea" id="RHEA:22836"/>
        <dbReference type="Rhea" id="RHEA-COMP:9623"/>
        <dbReference type="Rhea" id="RHEA-COMP:9685"/>
        <dbReference type="Rhea" id="RHEA-COMP:9916"/>
        <dbReference type="Rhea" id="RHEA-COMP:14125"/>
        <dbReference type="ChEBI" id="CHEBI:15378"/>
        <dbReference type="ChEBI" id="CHEBI:16526"/>
        <dbReference type="ChEBI" id="CHEBI:64479"/>
        <dbReference type="ChEBI" id="CHEBI:78449"/>
        <dbReference type="ChEBI" id="CHEBI:78776"/>
        <dbReference type="ChEBI" id="CHEBI:138651"/>
        <dbReference type="EC" id="2.3.1.41"/>
    </reaction>
    <physiologicalReaction direction="left-to-right" evidence="1">
        <dbReference type="Rhea" id="RHEA:22837"/>
    </physiologicalReaction>
</comment>
<comment type="catalytic activity">
    <reaction evidence="1">
        <text>(3Z)-decenoyl-[ACP] + malonyl-[ACP] + H(+) = 3-oxo-(5Z)-dodecenoyl-[ACP] + holo-[ACP] + CO2</text>
        <dbReference type="Rhea" id="RHEA:54940"/>
        <dbReference type="Rhea" id="RHEA-COMP:9623"/>
        <dbReference type="Rhea" id="RHEA-COMP:9685"/>
        <dbReference type="Rhea" id="RHEA-COMP:9927"/>
        <dbReference type="Rhea" id="RHEA-COMP:14042"/>
        <dbReference type="ChEBI" id="CHEBI:15378"/>
        <dbReference type="ChEBI" id="CHEBI:16526"/>
        <dbReference type="ChEBI" id="CHEBI:64479"/>
        <dbReference type="ChEBI" id="CHEBI:78449"/>
        <dbReference type="ChEBI" id="CHEBI:78798"/>
        <dbReference type="ChEBI" id="CHEBI:138410"/>
    </reaction>
    <physiologicalReaction direction="left-to-right" evidence="1">
        <dbReference type="Rhea" id="RHEA:54941"/>
    </physiologicalReaction>
</comment>
<comment type="pathway">
    <text evidence="1">Lipid metabolism; fatty acid biosynthesis.</text>
</comment>
<comment type="subunit">
    <text evidence="1">Homodimer.</text>
</comment>
<comment type="subcellular location">
    <subcellularLocation>
        <location evidence="1">Cytoplasm</location>
    </subcellularLocation>
</comment>
<comment type="similarity">
    <text evidence="3">Belongs to the thiolase-like superfamily. Beta-ketoacyl-ACP synthases family.</text>
</comment>
<organism>
    <name type="scientific">Buchnera aphidicola subsp. Baizongia pistaciae (strain Bp)</name>
    <dbReference type="NCBI Taxonomy" id="224915"/>
    <lineage>
        <taxon>Bacteria</taxon>
        <taxon>Pseudomonadati</taxon>
        <taxon>Pseudomonadota</taxon>
        <taxon>Gammaproteobacteria</taxon>
        <taxon>Enterobacterales</taxon>
        <taxon>Erwiniaceae</taxon>
        <taxon>Buchnera</taxon>
    </lineage>
</organism>
<evidence type="ECO:0000250" key="1">
    <source>
        <dbReference type="UniProtKB" id="P0A953"/>
    </source>
</evidence>
<evidence type="ECO:0000255" key="2">
    <source>
        <dbReference type="PROSITE-ProRule" id="PRU01348"/>
    </source>
</evidence>
<evidence type="ECO:0000305" key="3"/>
<name>FABB_BUCBP</name>
<feature type="chain" id="PRO_0000180310" description="3-oxoacyl-[acyl-carrier-protein] synthase 1">
    <location>
        <begin position="1"/>
        <end position="407"/>
    </location>
</feature>
<feature type="domain" description="Ketosynthase family 3 (KS3)" evidence="2">
    <location>
        <begin position="1"/>
        <end position="405"/>
    </location>
</feature>
<feature type="active site" description="For beta-ketoacyl synthase activity" evidence="2">
    <location>
        <position position="164"/>
    </location>
</feature>
<feature type="active site" description="For beta-ketoacyl synthase activity" evidence="2">
    <location>
        <position position="299"/>
    </location>
</feature>
<feature type="active site" description="For beta-ketoacyl synthase activity" evidence="2">
    <location>
        <position position="335"/>
    </location>
</feature>
<protein>
    <recommendedName>
        <fullName evidence="1">3-oxoacyl-[acyl-carrier-protein] synthase 1</fullName>
        <ecNumber evidence="1">2.3.1.41</ecNumber>
    </recommendedName>
    <alternativeName>
        <fullName evidence="1">3-oxoacyl-[acyl-carrier-protein] synthase I</fullName>
    </alternativeName>
    <alternativeName>
        <fullName evidence="1">Beta-ketoacyl-ACP synthase I</fullName>
        <shortName evidence="1">KAS I</shortName>
    </alternativeName>
</protein>
<gene>
    <name type="primary">fabB</name>
    <name type="ordered locus">bbp_086</name>
</gene>
<reference key="1">
    <citation type="journal article" date="2003" name="Proc. Natl. Acad. Sci. U.S.A.">
        <title>Reductive genome evolution in Buchnera aphidicola.</title>
        <authorList>
            <person name="van Ham R.C.H.J."/>
            <person name="Kamerbeek J."/>
            <person name="Palacios C."/>
            <person name="Rausell C."/>
            <person name="Abascal F."/>
            <person name="Bastolla U."/>
            <person name="Fernandez J.M."/>
            <person name="Jimenez L."/>
            <person name="Postigo M."/>
            <person name="Silva F.J."/>
            <person name="Tamames J."/>
            <person name="Viguera E."/>
            <person name="Latorre A."/>
            <person name="Valencia A."/>
            <person name="Moran F."/>
            <person name="Moya A."/>
        </authorList>
    </citation>
    <scope>NUCLEOTIDE SEQUENCE [LARGE SCALE GENOMIC DNA]</scope>
    <source>
        <strain>Bp</strain>
    </source>
</reference>
<keyword id="KW-0012">Acyltransferase</keyword>
<keyword id="KW-0963">Cytoplasm</keyword>
<keyword id="KW-0275">Fatty acid biosynthesis</keyword>
<keyword id="KW-0276">Fatty acid metabolism</keyword>
<keyword id="KW-0444">Lipid biosynthesis</keyword>
<keyword id="KW-0443">Lipid metabolism</keyword>
<keyword id="KW-1185">Reference proteome</keyword>
<keyword id="KW-0808">Transferase</keyword>
<dbReference type="EC" id="2.3.1.41" evidence="1"/>
<dbReference type="EMBL" id="AE016826">
    <property type="protein sequence ID" value="AAO26821.1"/>
    <property type="molecule type" value="Genomic_DNA"/>
</dbReference>
<dbReference type="RefSeq" id="WP_011091222.1">
    <property type="nucleotide sequence ID" value="NC_004545.1"/>
</dbReference>
<dbReference type="SMR" id="Q89AY4"/>
<dbReference type="STRING" id="224915.bbp_086"/>
<dbReference type="KEGG" id="bab:bbp_086"/>
<dbReference type="eggNOG" id="COG0304">
    <property type="taxonomic scope" value="Bacteria"/>
</dbReference>
<dbReference type="HOGENOM" id="CLU_000022_69_2_6"/>
<dbReference type="OrthoDB" id="9808669at2"/>
<dbReference type="UniPathway" id="UPA00094"/>
<dbReference type="Proteomes" id="UP000000601">
    <property type="component" value="Chromosome"/>
</dbReference>
<dbReference type="GO" id="GO:0005829">
    <property type="term" value="C:cytosol"/>
    <property type="evidence" value="ECO:0007669"/>
    <property type="project" value="TreeGrafter"/>
</dbReference>
<dbReference type="GO" id="GO:0004315">
    <property type="term" value="F:3-oxoacyl-[acyl-carrier-protein] synthase activity"/>
    <property type="evidence" value="ECO:0007669"/>
    <property type="project" value="UniProtKB-EC"/>
</dbReference>
<dbReference type="GO" id="GO:0006633">
    <property type="term" value="P:fatty acid biosynthetic process"/>
    <property type="evidence" value="ECO:0007669"/>
    <property type="project" value="UniProtKB-UniPathway"/>
</dbReference>
<dbReference type="CDD" id="cd00834">
    <property type="entry name" value="KAS_I_II"/>
    <property type="match status" value="1"/>
</dbReference>
<dbReference type="FunFam" id="3.40.47.10:FF:000006">
    <property type="entry name" value="3-oxoacyl-[acyl-carrier-protein] synthase I"/>
    <property type="match status" value="1"/>
</dbReference>
<dbReference type="Gene3D" id="3.40.47.10">
    <property type="match status" value="1"/>
</dbReference>
<dbReference type="InterPro" id="IPR000794">
    <property type="entry name" value="Beta-ketoacyl_synthase"/>
</dbReference>
<dbReference type="InterPro" id="IPR018201">
    <property type="entry name" value="Ketoacyl_synth_AS"/>
</dbReference>
<dbReference type="InterPro" id="IPR014031">
    <property type="entry name" value="Ketoacyl_synth_C"/>
</dbReference>
<dbReference type="InterPro" id="IPR014030">
    <property type="entry name" value="Ketoacyl_synth_N"/>
</dbReference>
<dbReference type="InterPro" id="IPR020841">
    <property type="entry name" value="PKS_Beta-ketoAc_synthase_dom"/>
</dbReference>
<dbReference type="InterPro" id="IPR016039">
    <property type="entry name" value="Thiolase-like"/>
</dbReference>
<dbReference type="PANTHER" id="PTHR11712:SF306">
    <property type="entry name" value="3-OXOACYL-[ACYL-CARRIER-PROTEIN] SYNTHASE 1"/>
    <property type="match status" value="1"/>
</dbReference>
<dbReference type="PANTHER" id="PTHR11712">
    <property type="entry name" value="POLYKETIDE SYNTHASE-RELATED"/>
    <property type="match status" value="1"/>
</dbReference>
<dbReference type="Pfam" id="PF00109">
    <property type="entry name" value="ketoacyl-synt"/>
    <property type="match status" value="1"/>
</dbReference>
<dbReference type="Pfam" id="PF02801">
    <property type="entry name" value="Ketoacyl-synt_C"/>
    <property type="match status" value="1"/>
</dbReference>
<dbReference type="SMART" id="SM00825">
    <property type="entry name" value="PKS_KS"/>
    <property type="match status" value="1"/>
</dbReference>
<dbReference type="SUPFAM" id="SSF53901">
    <property type="entry name" value="Thiolase-like"/>
    <property type="match status" value="2"/>
</dbReference>
<dbReference type="PROSITE" id="PS00606">
    <property type="entry name" value="KS3_1"/>
    <property type="match status" value="1"/>
</dbReference>
<dbReference type="PROSITE" id="PS52004">
    <property type="entry name" value="KS3_2"/>
    <property type="match status" value="1"/>
</dbReference>